<comment type="function">
    <text evidence="2 3">Transcriptional modulator that plays a role in various cellular processes, including embryonic development, cell differentiation, and tissue homeostasis. Upon BMP ligand binding to their receptors at the cell surface, is phosphorylated by activated type I BMP receptors (BMPRIs) and associates with SMAD4 to form an heteromeric complex which translocates into the nucleus acting as transcription factor. In turn, the hetero-trimeric complex recognizes cis-regulatory elements containing Smad Binding Elements (SBEs) to modulate the outcome of the signaling network. SMAD1/OAZ1/PSMB4 complex mediates the degradation of the CREBBP/EP300 repressor SNIP1. Positively regulates BMP4-induced expression of odontogenic development regulator MSX1 following IPO7-mediated nuclear import (By similarity).</text>
</comment>
<comment type="subunit">
    <text evidence="2 3">Found in a complex with SMAD4 and YY1. Interacts with HGS, NANOG and ZCCHC12 (By similarity). Upon C-terminus phosphorylation: forms trimers with another SMAD1 and the co-SMAD SMAD4 (By similarity). Interacts with PEBP2-alpha subunit, CREB-binding protein (CBP), p300, SMURF1, SMURF2, USP15 and HOXC8. Associates with ZNF423 or ZNF521 in response to BMP2 leading to activate transcription of BMP target genes. Interacts with SKOR1. Interacts (via MH2 domain) with LEMD3. Binding to LEMD3 results in at least a partial reduction of receptor-mediated phosphorylation. Forms a ternary complex with PSMB4 and OAZ1 before PSMB4 is incorporated into the 20S proteasome. Interacts (via MH2 domain) with FAM83G (via MH2 domain); in a SMAD4-independent manner. Interacts with ZC3H3 (By similarity). Interacts with TMEM119 (By similarity). Interacts (via MH1 and MH2 domains) with ZNF8 (By similarity). Interacts with RANBP3L; the interaction increases when SMAD1 is not phosphorylated and mediates SMAD1 nuclear export. Interacts with EGR1; this interaction inhibits SMAD1 dephosphorylation (By similarity). Interacts with SMAD6. Interacts with YAP1 (By similarity). Interacts with MTMR4; negatively regulates BMP signaling through SMAD1 dephosphorylation and retention in endosomes (By similarity).</text>
</comment>
<comment type="subcellular location">
    <subcellularLocation>
        <location evidence="3">Cytoplasm</location>
    </subcellularLocation>
    <subcellularLocation>
        <location evidence="3">Nucleus</location>
    </subcellularLocation>
    <text evidence="2 3">Cytoplasmic in the absence of ligand. Migrates to the nucleus when complexed with SMAD4. Co-localizes with LEMD3 at the nucleus inner membrane (By similarity). Exported from the nucleus to the cytoplasm when dephosphorylated (By similarity).</text>
</comment>
<comment type="tissue specificity">
    <text>Ubiquitous; present in liver, lung, stomach and spleen with lower level in heart, testes and skeletal muscle.</text>
</comment>
<comment type="domain">
    <text evidence="3">The MH2 domain mediates phosphorylation-dependent trimerization through L3 loop binding of phosphoserines in the adjacent subunit.</text>
</comment>
<comment type="PTM">
    <text evidence="3">Phosphorylation of the C-terminal SVS motif by BMP type 1 receptor kinase activates SMAD1 by promoting dissociation from the receptor and trimerization with SMAD4. Phosphorylation by ERK2 MAP kinase in response to EGF or HGF prevents SMAD1 nuclear accumulation and transcriptional activity in response to BMP (By similarity). Dephosphorylation, probably by PPM1A, induces its export from the nucleus to the cytoplasm (By similarity). Dephosphorylation is inhibited by association with EGR1 (By similarity). Phosphorylation by CDK8/9 creates binding sites for YAP1, and subsequent phosphorylation by GSK3 switches off YAP1 binding and adds binding sites for SMURF1 (By similarity).</text>
</comment>
<comment type="PTM">
    <text evidence="2 3">Ubiquitinated by SMAD-specific E3 ubiquitin ligase SMURF1, leading to its degradation. Monoubiquitinated, leading to prevent DNA-binding. Deubiquitination by USP15 alleviates inhibition and promotes activation of TGF-beta target genes. Dephosphorylation, probably by PPM1A, induces its export from the nucleus to the cytoplasm (By similarity). Phospho-SMAD1 is ubiquitinated by CHIP leading to disruption of the SMAD1-SMAD4 complex (By similarity).</text>
</comment>
<comment type="similarity">
    <text evidence="7">Belongs to the dwarfin/SMAD family.</text>
</comment>
<accession>P97588</accession>
<accession>O70520</accession>
<feature type="chain" id="PRO_0000090849" description="Mothers against decapentaplegic homolog 1">
    <location>
        <begin position="1"/>
        <end position="468"/>
    </location>
</feature>
<feature type="domain" description="MH1" evidence="4">
    <location>
        <begin position="12"/>
        <end position="136"/>
    </location>
</feature>
<feature type="domain" description="MH2" evidence="5">
    <location>
        <begin position="274"/>
        <end position="468"/>
    </location>
</feature>
<feature type="region of interest" description="Disordered" evidence="6">
    <location>
        <begin position="162"/>
        <end position="246"/>
    </location>
</feature>
<feature type="region of interest" description="L3 loop" evidence="3">
    <location>
        <begin position="421"/>
        <end position="431"/>
    </location>
</feature>
<feature type="compositionally biased region" description="Low complexity" evidence="6">
    <location>
        <begin position="188"/>
        <end position="210"/>
    </location>
</feature>
<feature type="compositionally biased region" description="Pro residues" evidence="6">
    <location>
        <begin position="221"/>
        <end position="232"/>
    </location>
</feature>
<feature type="compositionally biased region" description="Polar residues" evidence="6">
    <location>
        <begin position="237"/>
        <end position="246"/>
    </location>
</feature>
<feature type="binding site" evidence="1">
    <location>
        <position position="64"/>
    </location>
    <ligand>
        <name>Zn(2+)</name>
        <dbReference type="ChEBI" id="CHEBI:29105"/>
    </ligand>
</feature>
<feature type="binding site" evidence="1">
    <location>
        <position position="109"/>
    </location>
    <ligand>
        <name>Zn(2+)</name>
        <dbReference type="ChEBI" id="CHEBI:29105"/>
    </ligand>
</feature>
<feature type="binding site" evidence="1">
    <location>
        <position position="121"/>
    </location>
    <ligand>
        <name>Zn(2+)</name>
        <dbReference type="ChEBI" id="CHEBI:29105"/>
    </ligand>
</feature>
<feature type="binding site" evidence="1">
    <location>
        <position position="126"/>
    </location>
    <ligand>
        <name>Zn(2+)</name>
        <dbReference type="ChEBI" id="CHEBI:29105"/>
    </ligand>
</feature>
<feature type="modified residue" description="N-acetylmethionine" evidence="3">
    <location>
        <position position="1"/>
    </location>
</feature>
<feature type="modified residue" description="Phosphothreonine; by MINK1, TNIK and MAP4K4" evidence="3">
    <location>
        <position position="325"/>
    </location>
</feature>
<feature type="modified residue" description="Phosphoserine" evidence="3 5">
    <location>
        <position position="466"/>
    </location>
</feature>
<feature type="modified residue" description="Phosphoserine" evidence="3 5">
    <location>
        <position position="468"/>
    </location>
</feature>
<feature type="sequence conflict" description="In Ref. 2; AAC19116." evidence="7" ref="2">
    <original>AQY</original>
    <variation>PQS</variation>
    <location>
        <begin position="185"/>
        <end position="187"/>
    </location>
</feature>
<feature type="sequence conflict" description="In Ref. 2; AAC19116." evidence="7" ref="2">
    <original>R</original>
    <variation>A</variation>
    <location>
        <position position="289"/>
    </location>
</feature>
<feature type="sequence conflict" description="In Ref. 2; AAC19116." evidence="7" ref="2">
    <original>E</original>
    <variation>V</variation>
    <location>
        <position position="406"/>
    </location>
</feature>
<protein>
    <recommendedName>
        <fullName>Mothers against decapentaplegic homolog 1</fullName>
        <shortName>MAD homolog 1</shortName>
        <shortName>Mothers against DPP homolog 1</shortName>
    </recommendedName>
    <alternativeName>
        <fullName>SMAD family member 1</fullName>
        <shortName>SMAD 1</shortName>
        <shortName>Smad1</shortName>
    </alternativeName>
</protein>
<sequence length="468" mass="52713">MNVTSLFSFTSPAVKRLLGWKQGDEEEKWAEKAVDALVKKLKKKKGAMEELEKALSCPGQPSNCVTIPRSLDGRLQVSHRKGLPHVIYCRVWRWPDLQSHHELKPLECCEFPFGSKQKEVCINPYHYKRVESPVLPPVLVPRHSEYNPQHSLLAQFRNLGQNEPHMPLNATFPDSFQQPHSHPFAQYPNSSYPNSPGSSSSTYPHSPTSSDPGSPFQMPADTPPPAYLPPEDPMAQDGSQPMDTNMTNMTAPTLPAEINRGDVQAVAYEEPKHWCSIVYYELNNRVGERFHASSTSVLVDGFTDPSNNKNRFCLGLLSNVNRNSTIENTRRHIGKGVHLYYVGGEVYAECLSDSSIFVQSRNCNYHHGFHPTTVCKIPSGCSLKIFNNQEFAQLLAQSVNHGFETEYELTKMCTIRMSFVKGWGAEYHRQDVTSTPCWIEIHLHGPLQWLDKVLTQMGSPHNPISSVS</sequence>
<reference key="1">
    <citation type="journal article" date="1996" name="Proc. Natl. Acad. Sci. U.S.A.">
        <title>Regulation of transforming growth factor beta- and activin-induced transcription by mammalian Mad proteins.</title>
        <authorList>
            <person name="Chen Y."/>
            <person name="Lebrun J.-J."/>
            <person name="Vale W.W."/>
        </authorList>
    </citation>
    <scope>NUCLEOTIDE SEQUENCE [MRNA]</scope>
    <source>
        <tissue>Brain</tissue>
    </source>
</reference>
<reference key="2">
    <citation type="journal article" date="1999" name="J. Cell. Physiol.">
        <title>Cloning and expression of a rat Smad1: regulation by TGFbeta and modulation by the Ras/MEK pathway.</title>
        <authorList>
            <person name="Yue J."/>
            <person name="Hartsough M.T."/>
            <person name="Frey R.S."/>
            <person name="Frielle T."/>
            <person name="Mulder K.M."/>
        </authorList>
    </citation>
    <scope>NUCLEOTIDE SEQUENCE [MRNA]</scope>
    <source>
        <tissue>Intestine</tissue>
    </source>
</reference>
<gene>
    <name type="primary">Smad1</name>
    <name type="synonym">Mad1</name>
    <name type="synonym">Madh1</name>
</gene>
<name>SMAD1_RAT</name>
<keyword id="KW-0007">Acetylation</keyword>
<keyword id="KW-0963">Cytoplasm</keyword>
<keyword id="KW-0238">DNA-binding</keyword>
<keyword id="KW-0479">Metal-binding</keyword>
<keyword id="KW-0539">Nucleus</keyword>
<keyword id="KW-0597">Phosphoprotein</keyword>
<keyword id="KW-1185">Reference proteome</keyword>
<keyword id="KW-0804">Transcription</keyword>
<keyword id="KW-0805">Transcription regulation</keyword>
<keyword id="KW-0832">Ubl conjugation</keyword>
<keyword id="KW-0862">Zinc</keyword>
<proteinExistence type="evidence at transcript level"/>
<dbReference type="EMBL" id="U66478">
    <property type="protein sequence ID" value="AAC52943.1"/>
    <property type="molecule type" value="mRNA"/>
</dbReference>
<dbReference type="EMBL" id="AF067727">
    <property type="protein sequence ID" value="AAC19116.1"/>
    <property type="molecule type" value="mRNA"/>
</dbReference>
<dbReference type="RefSeq" id="NP_037262.2">
    <property type="nucleotide sequence ID" value="NM_013130.2"/>
</dbReference>
<dbReference type="SMR" id="P97588"/>
<dbReference type="FunCoup" id="P97588">
    <property type="interactions" value="1956"/>
</dbReference>
<dbReference type="STRING" id="10116.ENSRNOP00000025079"/>
<dbReference type="PhosphoSitePlus" id="P97588"/>
<dbReference type="jPOST" id="P97588"/>
<dbReference type="PaxDb" id="10116-ENSRNOP00000025079"/>
<dbReference type="GeneID" id="25671"/>
<dbReference type="KEGG" id="rno:25671"/>
<dbReference type="UCSC" id="RGD:3030">
    <property type="organism name" value="rat"/>
</dbReference>
<dbReference type="AGR" id="RGD:3030"/>
<dbReference type="CTD" id="4086"/>
<dbReference type="RGD" id="3030">
    <property type="gene designation" value="Smad1"/>
</dbReference>
<dbReference type="eggNOG" id="KOG3701">
    <property type="taxonomic scope" value="Eukaryota"/>
</dbReference>
<dbReference type="InParanoid" id="P97588"/>
<dbReference type="OrthoDB" id="5794312at2759"/>
<dbReference type="PhylomeDB" id="P97588"/>
<dbReference type="TreeFam" id="TF314923"/>
<dbReference type="Reactome" id="R-RNO-201451">
    <property type="pathway name" value="Signaling by BMP"/>
</dbReference>
<dbReference type="Reactome" id="R-RNO-5689880">
    <property type="pathway name" value="Ub-specific processing proteases"/>
</dbReference>
<dbReference type="PRO" id="PR:P97588"/>
<dbReference type="Proteomes" id="UP000002494">
    <property type="component" value="Unplaced"/>
</dbReference>
<dbReference type="GO" id="GO:0000785">
    <property type="term" value="C:chromatin"/>
    <property type="evidence" value="ECO:0000266"/>
    <property type="project" value="RGD"/>
</dbReference>
<dbReference type="GO" id="GO:0005737">
    <property type="term" value="C:cytoplasm"/>
    <property type="evidence" value="ECO:0000266"/>
    <property type="project" value="RGD"/>
</dbReference>
<dbReference type="GO" id="GO:0071144">
    <property type="term" value="C:heteromeric SMAD protein complex"/>
    <property type="evidence" value="ECO:0000266"/>
    <property type="project" value="RGD"/>
</dbReference>
<dbReference type="GO" id="GO:0071142">
    <property type="term" value="C:homomeric SMAD protein complex"/>
    <property type="evidence" value="ECO:0000266"/>
    <property type="project" value="RGD"/>
</dbReference>
<dbReference type="GO" id="GO:0001673">
    <property type="term" value="C:male germ cell nucleus"/>
    <property type="evidence" value="ECO:0000266"/>
    <property type="project" value="RGD"/>
</dbReference>
<dbReference type="GO" id="GO:0005637">
    <property type="term" value="C:nuclear inner membrane"/>
    <property type="evidence" value="ECO:0000266"/>
    <property type="project" value="RGD"/>
</dbReference>
<dbReference type="GO" id="GO:0005634">
    <property type="term" value="C:nucleus"/>
    <property type="evidence" value="ECO:0000250"/>
    <property type="project" value="UniProtKB"/>
</dbReference>
<dbReference type="GO" id="GO:0032991">
    <property type="term" value="C:protein-containing complex"/>
    <property type="evidence" value="ECO:0000266"/>
    <property type="project" value="RGD"/>
</dbReference>
<dbReference type="GO" id="GO:0005667">
    <property type="term" value="C:transcription regulator complex"/>
    <property type="evidence" value="ECO:0000266"/>
    <property type="project" value="RGD"/>
</dbReference>
<dbReference type="GO" id="GO:0070410">
    <property type="term" value="F:co-SMAD binding"/>
    <property type="evidence" value="ECO:0000266"/>
    <property type="project" value="RGD"/>
</dbReference>
<dbReference type="GO" id="GO:0017151">
    <property type="term" value="F:DEAD/H-box RNA helicase binding"/>
    <property type="evidence" value="ECO:0000266"/>
    <property type="project" value="RGD"/>
</dbReference>
<dbReference type="GO" id="GO:0001228">
    <property type="term" value="F:DNA-binding transcription activator activity, RNA polymerase II-specific"/>
    <property type="evidence" value="ECO:0000266"/>
    <property type="project" value="RGD"/>
</dbReference>
<dbReference type="GO" id="GO:0003700">
    <property type="term" value="F:DNA-binding transcription factor activity"/>
    <property type="evidence" value="ECO:0000266"/>
    <property type="project" value="RGD"/>
</dbReference>
<dbReference type="GO" id="GO:0000981">
    <property type="term" value="F:DNA-binding transcription factor activity, RNA polymerase II-specific"/>
    <property type="evidence" value="ECO:0000266"/>
    <property type="project" value="RGD"/>
</dbReference>
<dbReference type="GO" id="GO:0070411">
    <property type="term" value="F:I-SMAD binding"/>
    <property type="evidence" value="ECO:0000266"/>
    <property type="project" value="RGD"/>
</dbReference>
<dbReference type="GO" id="GO:0042802">
    <property type="term" value="F:identical protein binding"/>
    <property type="evidence" value="ECO:0000266"/>
    <property type="project" value="RGD"/>
</dbReference>
<dbReference type="GO" id="GO:0046872">
    <property type="term" value="F:metal ion binding"/>
    <property type="evidence" value="ECO:0007669"/>
    <property type="project" value="UniProtKB-KW"/>
</dbReference>
<dbReference type="GO" id="GO:0070878">
    <property type="term" value="F:primary miRNA binding"/>
    <property type="evidence" value="ECO:0000266"/>
    <property type="project" value="RGD"/>
</dbReference>
<dbReference type="GO" id="GO:0019901">
    <property type="term" value="F:protein kinase binding"/>
    <property type="evidence" value="ECO:0000266"/>
    <property type="project" value="RGD"/>
</dbReference>
<dbReference type="GO" id="GO:0000978">
    <property type="term" value="F:RNA polymerase II cis-regulatory region sequence-specific DNA binding"/>
    <property type="evidence" value="ECO:0000266"/>
    <property type="project" value="RGD"/>
</dbReference>
<dbReference type="GO" id="GO:0043565">
    <property type="term" value="F:sequence-specific DNA binding"/>
    <property type="evidence" value="ECO:0000266"/>
    <property type="project" value="RGD"/>
</dbReference>
<dbReference type="GO" id="GO:0031625">
    <property type="term" value="F:ubiquitin protein ligase binding"/>
    <property type="evidence" value="ECO:0000266"/>
    <property type="project" value="RGD"/>
</dbReference>
<dbReference type="GO" id="GO:0009653">
    <property type="term" value="P:anatomical structure morphogenesis"/>
    <property type="evidence" value="ECO:0000318"/>
    <property type="project" value="GO_Central"/>
</dbReference>
<dbReference type="GO" id="GO:0030509">
    <property type="term" value="P:BMP signaling pathway"/>
    <property type="evidence" value="ECO:0000315"/>
    <property type="project" value="RGD"/>
</dbReference>
<dbReference type="GO" id="GO:0060348">
    <property type="term" value="P:bone development"/>
    <property type="evidence" value="ECO:0000266"/>
    <property type="project" value="RGD"/>
</dbReference>
<dbReference type="GO" id="GO:0060038">
    <property type="term" value="P:cardiac muscle cell proliferation"/>
    <property type="evidence" value="ECO:0000266"/>
    <property type="project" value="RGD"/>
</dbReference>
<dbReference type="GO" id="GO:0014898">
    <property type="term" value="P:cardiac muscle hypertrophy in response to stress"/>
    <property type="evidence" value="ECO:0000315"/>
    <property type="project" value="RGD"/>
</dbReference>
<dbReference type="GO" id="GO:0051216">
    <property type="term" value="P:cartilage development"/>
    <property type="evidence" value="ECO:0000266"/>
    <property type="project" value="RGD"/>
</dbReference>
<dbReference type="GO" id="GO:0030154">
    <property type="term" value="P:cell differentiation"/>
    <property type="evidence" value="ECO:0000318"/>
    <property type="project" value="GO_Central"/>
</dbReference>
<dbReference type="GO" id="GO:0008283">
    <property type="term" value="P:cell population proliferation"/>
    <property type="evidence" value="ECO:0000266"/>
    <property type="project" value="RGD"/>
</dbReference>
<dbReference type="GO" id="GO:0006351">
    <property type="term" value="P:DNA-templated transcription"/>
    <property type="evidence" value="ECO:0000266"/>
    <property type="project" value="RGD"/>
</dbReference>
<dbReference type="GO" id="GO:0009880">
    <property type="term" value="P:embryonic pattern specification"/>
    <property type="evidence" value="ECO:0000250"/>
    <property type="project" value="UniProtKB"/>
</dbReference>
<dbReference type="GO" id="GO:0007276">
    <property type="term" value="P:gamete generation"/>
    <property type="evidence" value="ECO:0000266"/>
    <property type="project" value="RGD"/>
</dbReference>
<dbReference type="GO" id="GO:0030902">
    <property type="term" value="P:hindbrain development"/>
    <property type="evidence" value="ECO:0000266"/>
    <property type="project" value="RGD"/>
</dbReference>
<dbReference type="GO" id="GO:0042592">
    <property type="term" value="P:homeostatic process"/>
    <property type="evidence" value="ECO:0000266"/>
    <property type="project" value="RGD"/>
</dbReference>
<dbReference type="GO" id="GO:0006954">
    <property type="term" value="P:inflammatory response"/>
    <property type="evidence" value="ECO:0000266"/>
    <property type="project" value="RGD"/>
</dbReference>
<dbReference type="GO" id="GO:0006879">
    <property type="term" value="P:intracellular iron ion homeostasis"/>
    <property type="evidence" value="ECO:0000266"/>
    <property type="project" value="RGD"/>
</dbReference>
<dbReference type="GO" id="GO:0001822">
    <property type="term" value="P:kidney development"/>
    <property type="evidence" value="ECO:0000270"/>
    <property type="project" value="RGD"/>
</dbReference>
<dbReference type="GO" id="GO:0000165">
    <property type="term" value="P:MAPK cascade"/>
    <property type="evidence" value="ECO:0000315"/>
    <property type="project" value="RGD"/>
</dbReference>
<dbReference type="GO" id="GO:0001710">
    <property type="term" value="P:mesodermal cell fate commitment"/>
    <property type="evidence" value="ECO:0000266"/>
    <property type="project" value="RGD"/>
</dbReference>
<dbReference type="GO" id="GO:0030901">
    <property type="term" value="P:midbrain development"/>
    <property type="evidence" value="ECO:0000266"/>
    <property type="project" value="RGD"/>
</dbReference>
<dbReference type="GO" id="GO:0008285">
    <property type="term" value="P:negative regulation of cell population proliferation"/>
    <property type="evidence" value="ECO:0000266"/>
    <property type="project" value="RGD"/>
</dbReference>
<dbReference type="GO" id="GO:0010656">
    <property type="term" value="P:negative regulation of muscle cell apoptotic process"/>
    <property type="evidence" value="ECO:0000270"/>
    <property type="project" value="RGD"/>
</dbReference>
<dbReference type="GO" id="GO:0051148">
    <property type="term" value="P:negative regulation of muscle cell differentiation"/>
    <property type="evidence" value="ECO:0000266"/>
    <property type="project" value="RGD"/>
</dbReference>
<dbReference type="GO" id="GO:0001503">
    <property type="term" value="P:ossification"/>
    <property type="evidence" value="ECO:0000266"/>
    <property type="project" value="RGD"/>
</dbReference>
<dbReference type="GO" id="GO:0001649">
    <property type="term" value="P:osteoblast differentiation"/>
    <property type="evidence" value="ECO:0000266"/>
    <property type="project" value="RGD"/>
</dbReference>
<dbReference type="GO" id="GO:0002051">
    <property type="term" value="P:osteoblast fate commitment"/>
    <property type="evidence" value="ECO:0000266"/>
    <property type="project" value="RGD"/>
</dbReference>
<dbReference type="GO" id="GO:0061036">
    <property type="term" value="P:positive regulation of cartilage development"/>
    <property type="evidence" value="ECO:0000266"/>
    <property type="project" value="RGD"/>
</dbReference>
<dbReference type="GO" id="GO:0045597">
    <property type="term" value="P:positive regulation of cell differentiation"/>
    <property type="evidence" value="ECO:0000314"/>
    <property type="project" value="RGD"/>
</dbReference>
<dbReference type="GO" id="GO:0050775">
    <property type="term" value="P:positive regulation of dendrite morphogenesis"/>
    <property type="evidence" value="ECO:0000270"/>
    <property type="project" value="RGD"/>
</dbReference>
<dbReference type="GO" id="GO:0010628">
    <property type="term" value="P:positive regulation of gene expression"/>
    <property type="evidence" value="ECO:0000266"/>
    <property type="project" value="RGD"/>
</dbReference>
<dbReference type="GO" id="GO:1902895">
    <property type="term" value="P:positive regulation of miRNA transcription"/>
    <property type="evidence" value="ECO:0000266"/>
    <property type="project" value="RGD"/>
</dbReference>
<dbReference type="GO" id="GO:0045669">
    <property type="term" value="P:positive regulation of osteoblast differentiation"/>
    <property type="evidence" value="ECO:0000266"/>
    <property type="project" value="RGD"/>
</dbReference>
<dbReference type="GO" id="GO:1903672">
    <property type="term" value="P:positive regulation of sprouting angiogenesis"/>
    <property type="evidence" value="ECO:0000266"/>
    <property type="project" value="RGD"/>
</dbReference>
<dbReference type="GO" id="GO:0045944">
    <property type="term" value="P:positive regulation of transcription by RNA polymerase II"/>
    <property type="evidence" value="ECO:0000250"/>
    <property type="project" value="UniProtKB"/>
</dbReference>
<dbReference type="GO" id="GO:0006357">
    <property type="term" value="P:regulation of transcription by RNA polymerase II"/>
    <property type="evidence" value="ECO:0000266"/>
    <property type="project" value="RGD"/>
</dbReference>
<dbReference type="GO" id="GO:0009410">
    <property type="term" value="P:response to xenobiotic stimulus"/>
    <property type="evidence" value="ECO:0000314"/>
    <property type="project" value="RGD"/>
</dbReference>
<dbReference type="GO" id="GO:0060395">
    <property type="term" value="P:SMAD protein signal transduction"/>
    <property type="evidence" value="ECO:0000266"/>
    <property type="project" value="RGD"/>
</dbReference>
<dbReference type="GO" id="GO:0048863">
    <property type="term" value="P:stem cell differentiation"/>
    <property type="evidence" value="ECO:0000266"/>
    <property type="project" value="RGD"/>
</dbReference>
<dbReference type="GO" id="GO:0006366">
    <property type="term" value="P:transcription by RNA polymerase II"/>
    <property type="evidence" value="ECO:0000266"/>
    <property type="project" value="RGD"/>
</dbReference>
<dbReference type="GO" id="GO:0007179">
    <property type="term" value="P:transforming growth factor beta receptor signaling pathway"/>
    <property type="evidence" value="ECO:0000266"/>
    <property type="project" value="RGD"/>
</dbReference>
<dbReference type="GO" id="GO:0001657">
    <property type="term" value="P:ureteric bud development"/>
    <property type="evidence" value="ECO:0000266"/>
    <property type="project" value="RGD"/>
</dbReference>
<dbReference type="CDD" id="cd10490">
    <property type="entry name" value="MH1_SMAD_1_5_9"/>
    <property type="match status" value="1"/>
</dbReference>
<dbReference type="CDD" id="cd10497">
    <property type="entry name" value="MH2_SMAD_1_5_9"/>
    <property type="match status" value="1"/>
</dbReference>
<dbReference type="FunFam" id="2.60.200.10:FF:000001">
    <property type="entry name" value="Mothers against decapentaplegic homolog"/>
    <property type="match status" value="1"/>
</dbReference>
<dbReference type="FunFam" id="3.90.520.10:FF:000001">
    <property type="entry name" value="Mothers against decapentaplegic homolog"/>
    <property type="match status" value="1"/>
</dbReference>
<dbReference type="Gene3D" id="2.60.200.10">
    <property type="match status" value="1"/>
</dbReference>
<dbReference type="Gene3D" id="3.90.520.10">
    <property type="entry name" value="SMAD MH1 domain"/>
    <property type="match status" value="1"/>
</dbReference>
<dbReference type="InterPro" id="IPR013790">
    <property type="entry name" value="Dwarfin"/>
</dbReference>
<dbReference type="InterPro" id="IPR003619">
    <property type="entry name" value="MAD_homology1_Dwarfin-type"/>
</dbReference>
<dbReference type="InterPro" id="IPR013019">
    <property type="entry name" value="MAD_homology_MH1"/>
</dbReference>
<dbReference type="InterPro" id="IPR017855">
    <property type="entry name" value="SMAD-like_dom_sf"/>
</dbReference>
<dbReference type="InterPro" id="IPR001132">
    <property type="entry name" value="SMAD_dom_Dwarfin-type"/>
</dbReference>
<dbReference type="InterPro" id="IPR008984">
    <property type="entry name" value="SMAD_FHA_dom_sf"/>
</dbReference>
<dbReference type="InterPro" id="IPR036578">
    <property type="entry name" value="SMAD_MH1_sf"/>
</dbReference>
<dbReference type="PANTHER" id="PTHR13703:SF23">
    <property type="entry name" value="MOTHERS AGAINST DECAPENTAPLEGIC HOMOLOG 1"/>
    <property type="match status" value="1"/>
</dbReference>
<dbReference type="PANTHER" id="PTHR13703">
    <property type="entry name" value="SMAD"/>
    <property type="match status" value="1"/>
</dbReference>
<dbReference type="Pfam" id="PF03165">
    <property type="entry name" value="MH1"/>
    <property type="match status" value="1"/>
</dbReference>
<dbReference type="Pfam" id="PF03166">
    <property type="entry name" value="MH2"/>
    <property type="match status" value="1"/>
</dbReference>
<dbReference type="SMART" id="SM00523">
    <property type="entry name" value="DWA"/>
    <property type="match status" value="1"/>
</dbReference>
<dbReference type="SMART" id="SM00524">
    <property type="entry name" value="DWB"/>
    <property type="match status" value="1"/>
</dbReference>
<dbReference type="SUPFAM" id="SSF56366">
    <property type="entry name" value="SMAD MH1 domain"/>
    <property type="match status" value="1"/>
</dbReference>
<dbReference type="SUPFAM" id="SSF49879">
    <property type="entry name" value="SMAD/FHA domain"/>
    <property type="match status" value="1"/>
</dbReference>
<dbReference type="PROSITE" id="PS51075">
    <property type="entry name" value="MH1"/>
    <property type="match status" value="1"/>
</dbReference>
<dbReference type="PROSITE" id="PS51076">
    <property type="entry name" value="MH2"/>
    <property type="match status" value="1"/>
</dbReference>
<organism>
    <name type="scientific">Rattus norvegicus</name>
    <name type="common">Rat</name>
    <dbReference type="NCBI Taxonomy" id="10116"/>
    <lineage>
        <taxon>Eukaryota</taxon>
        <taxon>Metazoa</taxon>
        <taxon>Chordata</taxon>
        <taxon>Craniata</taxon>
        <taxon>Vertebrata</taxon>
        <taxon>Euteleostomi</taxon>
        <taxon>Mammalia</taxon>
        <taxon>Eutheria</taxon>
        <taxon>Euarchontoglires</taxon>
        <taxon>Glires</taxon>
        <taxon>Rodentia</taxon>
        <taxon>Myomorpha</taxon>
        <taxon>Muroidea</taxon>
        <taxon>Muridae</taxon>
        <taxon>Murinae</taxon>
        <taxon>Rattus</taxon>
    </lineage>
</organism>
<evidence type="ECO:0000250" key="1"/>
<evidence type="ECO:0000250" key="2">
    <source>
        <dbReference type="UniProtKB" id="P70340"/>
    </source>
</evidence>
<evidence type="ECO:0000250" key="3">
    <source>
        <dbReference type="UniProtKB" id="Q15797"/>
    </source>
</evidence>
<evidence type="ECO:0000255" key="4">
    <source>
        <dbReference type="PROSITE-ProRule" id="PRU00438"/>
    </source>
</evidence>
<evidence type="ECO:0000255" key="5">
    <source>
        <dbReference type="PROSITE-ProRule" id="PRU00439"/>
    </source>
</evidence>
<evidence type="ECO:0000256" key="6">
    <source>
        <dbReference type="SAM" id="MobiDB-lite"/>
    </source>
</evidence>
<evidence type="ECO:0000305" key="7"/>